<protein>
    <recommendedName>
        <fullName>Uncharacterized protein MJ1085</fullName>
    </recommendedName>
</protein>
<organism>
    <name type="scientific">Methanocaldococcus jannaschii (strain ATCC 43067 / DSM 2661 / JAL-1 / JCM 10045 / NBRC 100440)</name>
    <name type="common">Methanococcus jannaschii</name>
    <dbReference type="NCBI Taxonomy" id="243232"/>
    <lineage>
        <taxon>Archaea</taxon>
        <taxon>Methanobacteriati</taxon>
        <taxon>Methanobacteriota</taxon>
        <taxon>Methanomada group</taxon>
        <taxon>Methanococci</taxon>
        <taxon>Methanococcales</taxon>
        <taxon>Methanocaldococcaceae</taxon>
        <taxon>Methanocaldococcus</taxon>
    </lineage>
</organism>
<accession>Q58485</accession>
<dbReference type="EMBL" id="L77117">
    <property type="protein sequence ID" value="AAB99095.1"/>
    <property type="molecule type" value="Genomic_DNA"/>
</dbReference>
<dbReference type="PIR" id="D64435">
    <property type="entry name" value="D64435"/>
</dbReference>
<dbReference type="STRING" id="243232.MJ_1085"/>
<dbReference type="PaxDb" id="243232-MJ_1085"/>
<dbReference type="DNASU" id="1451981"/>
<dbReference type="EnsemblBacteria" id="AAB99095">
    <property type="protein sequence ID" value="AAB99095"/>
    <property type="gene ID" value="MJ_1085"/>
</dbReference>
<dbReference type="KEGG" id="mja:MJ_1085"/>
<dbReference type="eggNOG" id="arCOG06454">
    <property type="taxonomic scope" value="Archaea"/>
</dbReference>
<dbReference type="HOGENOM" id="CLU_537068_0_0_2"/>
<dbReference type="InParanoid" id="Q58485"/>
<dbReference type="OrthoDB" id="65575at2157"/>
<dbReference type="Proteomes" id="UP000000805">
    <property type="component" value="Chromosome"/>
</dbReference>
<dbReference type="Gene3D" id="3.40.50.11980">
    <property type="match status" value="1"/>
</dbReference>
<feature type="chain" id="PRO_0000107163" description="Uncharacterized protein MJ1085">
    <location>
        <begin position="1"/>
        <end position="509"/>
    </location>
</feature>
<feature type="domain" description="RNase NYN" evidence="1">
    <location>
        <begin position="358"/>
        <end position="480"/>
    </location>
</feature>
<sequence length="509" mass="59471">MDNMGKDKNILKIRANLIKYIDVDEIEELPKVKVKNVEEFLEAHRVLGKHVICRYKDNLEDIFFFVDNGVIFYIPSDGFKTLEDLIEAKSLGLSAEEYYEYLEFGDINEYKKYKSSGFKSIEEYKKAKDLGFIGGLEELVKEGIAQRLDDKYIIEYLYYGILENREFSNDAELYYFAIEKGFSDFDELKNALKAGFGDANEYKDALNRGFKDAYEYNDALSKGFRDADEYKIAKAIGVNSKKELEEYMELKRICENFGLETFEEGYLLKVLMDLKIDEEITLKELYNKLKEKERLMKIKKDVLNKLANLSSPSWYSTRFTTVDDLEEYLVDSEIVSYLGEYIKEEKIFRRIYPPKPSRRIVIIDAISVLNNMHNLSPNSIENLIKKIKNAGFKNIITVMDTVTYYKIKGKDICRFLANECNIKVSKSKDEAYKLIIEYIKNFGALVISNASFKDYIIKDSKLFYKDIKEYIIPFIVENGEINLDIELLRKLYTEVVTKRIEKIKSNVVS</sequence>
<keyword id="KW-1185">Reference proteome</keyword>
<name>Y1085_METJA</name>
<evidence type="ECO:0000255" key="1"/>
<proteinExistence type="predicted"/>
<gene>
    <name type="ordered locus">MJ1085</name>
</gene>
<reference key="1">
    <citation type="journal article" date="1996" name="Science">
        <title>Complete genome sequence of the methanogenic archaeon, Methanococcus jannaschii.</title>
        <authorList>
            <person name="Bult C.J."/>
            <person name="White O."/>
            <person name="Olsen G.J."/>
            <person name="Zhou L."/>
            <person name="Fleischmann R.D."/>
            <person name="Sutton G.G."/>
            <person name="Blake J.A."/>
            <person name="FitzGerald L.M."/>
            <person name="Clayton R.A."/>
            <person name="Gocayne J.D."/>
            <person name="Kerlavage A.R."/>
            <person name="Dougherty B.A."/>
            <person name="Tomb J.-F."/>
            <person name="Adams M.D."/>
            <person name="Reich C.I."/>
            <person name="Overbeek R."/>
            <person name="Kirkness E.F."/>
            <person name="Weinstock K.G."/>
            <person name="Merrick J.M."/>
            <person name="Glodek A."/>
            <person name="Scott J.L."/>
            <person name="Geoghagen N.S.M."/>
            <person name="Weidman J.F."/>
            <person name="Fuhrmann J.L."/>
            <person name="Nguyen D."/>
            <person name="Utterback T.R."/>
            <person name="Kelley J.M."/>
            <person name="Peterson J.D."/>
            <person name="Sadow P.W."/>
            <person name="Hanna M.C."/>
            <person name="Cotton M.D."/>
            <person name="Roberts K.M."/>
            <person name="Hurst M.A."/>
            <person name="Kaine B.P."/>
            <person name="Borodovsky M."/>
            <person name="Klenk H.-P."/>
            <person name="Fraser C.M."/>
            <person name="Smith H.O."/>
            <person name="Woese C.R."/>
            <person name="Venter J.C."/>
        </authorList>
    </citation>
    <scope>NUCLEOTIDE SEQUENCE [LARGE SCALE GENOMIC DNA]</scope>
    <source>
        <strain>ATCC 43067 / DSM 2661 / JAL-1 / JCM 10045 / NBRC 100440</strain>
    </source>
</reference>